<keyword id="KW-0997">Cell inner membrane</keyword>
<keyword id="KW-1003">Cell membrane</keyword>
<keyword id="KW-0472">Membrane</keyword>
<accession>Q663S8</accession>
<protein>
    <recommendedName>
        <fullName evidence="1">Putative membrane protein insertion efficiency factor</fullName>
    </recommendedName>
</protein>
<gene>
    <name type="ordered locus">YPTB3947</name>
</gene>
<evidence type="ECO:0000255" key="1">
    <source>
        <dbReference type="HAMAP-Rule" id="MF_00386"/>
    </source>
</evidence>
<evidence type="ECO:0000256" key="2">
    <source>
        <dbReference type="SAM" id="MobiDB-lite"/>
    </source>
</evidence>
<organism>
    <name type="scientific">Yersinia pseudotuberculosis serotype I (strain IP32953)</name>
    <dbReference type="NCBI Taxonomy" id="273123"/>
    <lineage>
        <taxon>Bacteria</taxon>
        <taxon>Pseudomonadati</taxon>
        <taxon>Pseudomonadota</taxon>
        <taxon>Gammaproteobacteria</taxon>
        <taxon>Enterobacterales</taxon>
        <taxon>Yersiniaceae</taxon>
        <taxon>Yersinia</taxon>
    </lineage>
</organism>
<dbReference type="EMBL" id="BX936398">
    <property type="protein sequence ID" value="CAH23185.1"/>
    <property type="molecule type" value="Genomic_DNA"/>
</dbReference>
<dbReference type="KEGG" id="ypo:BZ17_2629"/>
<dbReference type="KEGG" id="yps:YPTB3947"/>
<dbReference type="PATRIC" id="fig|273123.14.peg.2756"/>
<dbReference type="Proteomes" id="UP000001011">
    <property type="component" value="Chromosome"/>
</dbReference>
<dbReference type="GO" id="GO:0005886">
    <property type="term" value="C:plasma membrane"/>
    <property type="evidence" value="ECO:0007669"/>
    <property type="project" value="UniProtKB-SubCell"/>
</dbReference>
<dbReference type="HAMAP" id="MF_00386">
    <property type="entry name" value="UPF0161_YidD"/>
    <property type="match status" value="1"/>
</dbReference>
<dbReference type="InterPro" id="IPR002696">
    <property type="entry name" value="Membr_insert_effic_factor_YidD"/>
</dbReference>
<dbReference type="NCBIfam" id="TIGR00278">
    <property type="entry name" value="membrane protein insertion efficiency factor YidD"/>
    <property type="match status" value="1"/>
</dbReference>
<dbReference type="PANTHER" id="PTHR33383">
    <property type="entry name" value="MEMBRANE PROTEIN INSERTION EFFICIENCY FACTOR-RELATED"/>
    <property type="match status" value="1"/>
</dbReference>
<dbReference type="PANTHER" id="PTHR33383:SF1">
    <property type="entry name" value="MEMBRANE PROTEIN INSERTION EFFICIENCY FACTOR-RELATED"/>
    <property type="match status" value="1"/>
</dbReference>
<dbReference type="Pfam" id="PF01809">
    <property type="entry name" value="YidD"/>
    <property type="match status" value="1"/>
</dbReference>
<dbReference type="SMART" id="SM01234">
    <property type="entry name" value="Haemolytic"/>
    <property type="match status" value="1"/>
</dbReference>
<name>YIDD_YERPS</name>
<proteinExistence type="inferred from homology"/>
<feature type="chain" id="PRO_0000253200" description="Putative membrane protein insertion efficiency factor">
    <location>
        <begin position="1"/>
        <end position="85"/>
    </location>
</feature>
<feature type="region of interest" description="Disordered" evidence="2">
    <location>
        <begin position="66"/>
        <end position="85"/>
    </location>
</feature>
<reference key="1">
    <citation type="journal article" date="2004" name="Proc. Natl. Acad. Sci. U.S.A.">
        <title>Insights into the evolution of Yersinia pestis through whole-genome comparison with Yersinia pseudotuberculosis.</title>
        <authorList>
            <person name="Chain P.S.G."/>
            <person name="Carniel E."/>
            <person name="Larimer F.W."/>
            <person name="Lamerdin J."/>
            <person name="Stoutland P.O."/>
            <person name="Regala W.M."/>
            <person name="Georgescu A.M."/>
            <person name="Vergez L.M."/>
            <person name="Land M.L."/>
            <person name="Motin V.L."/>
            <person name="Brubaker R.R."/>
            <person name="Fowler J."/>
            <person name="Hinnebusch J."/>
            <person name="Marceau M."/>
            <person name="Medigue C."/>
            <person name="Simonet M."/>
            <person name="Chenal-Francisque V."/>
            <person name="Souza B."/>
            <person name="Dacheux D."/>
            <person name="Elliott J.M."/>
            <person name="Derbise A."/>
            <person name="Hauser L.J."/>
            <person name="Garcia E."/>
        </authorList>
    </citation>
    <scope>NUCLEOTIDE SEQUENCE [LARGE SCALE GENOMIC DNA]</scope>
    <source>
        <strain>IP32953</strain>
    </source>
</reference>
<sequence length="85" mass="9458">MASPLSPGSRILIGLIRGYQLVISPLLGPRCRFHPTCSHYGIEALRRFGMIKGSWLTLKRVLKCHPLNSGGDDPVPPKLDDNREH</sequence>
<comment type="function">
    <text evidence="1">Could be involved in insertion of integral membrane proteins into the membrane.</text>
</comment>
<comment type="subcellular location">
    <subcellularLocation>
        <location evidence="1">Cell inner membrane</location>
        <topology evidence="1">Peripheral membrane protein</topology>
        <orientation evidence="1">Cytoplasmic side</orientation>
    </subcellularLocation>
</comment>
<comment type="similarity">
    <text evidence="1">Belongs to the UPF0161 family.</text>
</comment>